<accession>Q9V3U0</accession>
<accession>Q8SWR5</accession>
<sequence>MNDLKPATSYRSTSLHDAVKLRLDEPSSFSQTVPPQTIPEFFKESCEKYSDLPALVWETPGSGNDGWTTLTFGEYQERVEQAALMLLSVGVEERSSVGILAFNCPEWFFAEFGALRAGAVVAGVYPSNSAEAVHHVLATGESSVCVVDDAQQMAKLRAIKERLPRLKAVIQLHGPFEAFVDHEPGYFSWQKLQEQTFSSELKEELLARESRIRANECAMLIFTSGTVGMPKAVMLSHDNLVFDTKSAAAHMQDIQVGKESFVSYLPLSHVAAQIFDVFLGLSHAGCVTFADKDALKGTLIKTFRKARPTKMFGVPRVFEKLQERLVAAEAKARPYSRLLLARARAAVAEHQTTLMAGKSPSIYGNAKYWLACRVVKPIREMIGVDNCRVFFTGGAPTSEELKQFFLGLDIALGECYGMSETSGAITLNVDISNLYSAGQACEGVTLKIHEPDCNGQGEILMRGRLVFMGYLGLPDKTEETVKEDGWLHSGDLGYIDPKGNLIISGRLKELIITAGGENIPPVHIEELIKKELPCVSNVLLIGDHRKYLTVLLSLKTKCDAKTGIPLDALREETIEWLRDLDIHETRLSELLNIPADLQLPNDTAALAATLEITAKPKLLEAIEEGIKRANKYAISNAQKVQKFALIAHEFSVATGELGPTLKIRRNIVHAKYAKVIERLYK</sequence>
<evidence type="ECO:0000250" key="1"/>
<evidence type="ECO:0000269" key="2">
    <source>
    </source>
</evidence>
<evidence type="ECO:0000269" key="3">
    <source>
    </source>
</evidence>
<evidence type="ECO:0000269" key="4">
    <source>
    </source>
</evidence>
<evidence type="ECO:0000303" key="5">
    <source>
    </source>
</evidence>
<evidence type="ECO:0000303" key="6">
    <source>
    </source>
</evidence>
<evidence type="ECO:0000305" key="7"/>
<evidence type="ECO:0000305" key="8">
    <source>
    </source>
</evidence>
<evidence type="ECO:0000305" key="9">
    <source>
    </source>
</evidence>
<evidence type="ECO:0000312" key="10">
    <source>
        <dbReference type="FlyBase" id="FBgn0286723"/>
    </source>
</evidence>
<dbReference type="EC" id="6.2.1.3" evidence="9"/>
<dbReference type="EMBL" id="AE014134">
    <property type="protein sequence ID" value="AAF53370.1"/>
    <property type="molecule type" value="Genomic_DNA"/>
</dbReference>
<dbReference type="EMBL" id="BT021247">
    <property type="protein sequence ID" value="AAX33395.1"/>
    <property type="molecule type" value="mRNA"/>
</dbReference>
<dbReference type="EMBL" id="AY095523">
    <property type="protein sequence ID" value="AAM12254.1"/>
    <property type="status" value="ALT_SEQ"/>
    <property type="molecule type" value="mRNA"/>
</dbReference>
<dbReference type="RefSeq" id="NP_609696.1">
    <property type="nucleotide sequence ID" value="NM_135852.4"/>
</dbReference>
<dbReference type="SMR" id="Q9V3U0"/>
<dbReference type="BioGRID" id="60849">
    <property type="interactions" value="1"/>
</dbReference>
<dbReference type="FunCoup" id="Q9V3U0">
    <property type="interactions" value="64"/>
</dbReference>
<dbReference type="STRING" id="7227.FBpp0080168"/>
<dbReference type="PaxDb" id="7227-FBpp0080168"/>
<dbReference type="DNASU" id="34822"/>
<dbReference type="EnsemblMetazoa" id="FBtr0080591">
    <property type="protein sequence ID" value="FBpp0080168"/>
    <property type="gene ID" value="FBgn0286723"/>
</dbReference>
<dbReference type="GeneID" id="34822"/>
<dbReference type="KEGG" id="dme:Dmel_CG4500"/>
<dbReference type="UCSC" id="CG4500-RA">
    <property type="organism name" value="d. melanogaster"/>
</dbReference>
<dbReference type="AGR" id="FB:FBgn0286723"/>
<dbReference type="CTD" id="34822"/>
<dbReference type="FlyBase" id="FBgn0286723">
    <property type="gene designation" value="hll"/>
</dbReference>
<dbReference type="VEuPathDB" id="VectorBase:FBgn0286723"/>
<dbReference type="eggNOG" id="KOG1256">
    <property type="taxonomic scope" value="Eukaryota"/>
</dbReference>
<dbReference type="GeneTree" id="ENSGT00940000172512"/>
<dbReference type="HOGENOM" id="CLU_000022_45_5_1"/>
<dbReference type="InParanoid" id="Q9V3U0"/>
<dbReference type="OMA" id="IGDHRKY"/>
<dbReference type="OrthoDB" id="3633556at2759"/>
<dbReference type="PhylomeDB" id="Q9V3U0"/>
<dbReference type="Reactome" id="R-DME-75876">
    <property type="pathway name" value="Synthesis of very long-chain fatty acyl-CoAs"/>
</dbReference>
<dbReference type="BioGRID-ORCS" id="34822">
    <property type="hits" value="0 hits in 3 CRISPR screens"/>
</dbReference>
<dbReference type="GenomeRNAi" id="34822"/>
<dbReference type="PRO" id="PR:Q9V3U0"/>
<dbReference type="Proteomes" id="UP000000803">
    <property type="component" value="Chromosome 2L"/>
</dbReference>
<dbReference type="Bgee" id="FBgn0286723">
    <property type="expression patterns" value="Expressed in adult Malpighian tubule principal cell of initial segment in Malpighian tubule and 20 other cell types or tissues"/>
</dbReference>
<dbReference type="GO" id="GO:0005737">
    <property type="term" value="C:cytoplasm"/>
    <property type="evidence" value="ECO:0000318"/>
    <property type="project" value="GO_Central"/>
</dbReference>
<dbReference type="GO" id="GO:0005524">
    <property type="term" value="F:ATP binding"/>
    <property type="evidence" value="ECO:0007669"/>
    <property type="project" value="UniProtKB-KW"/>
</dbReference>
<dbReference type="GO" id="GO:0004467">
    <property type="term" value="F:long-chain fatty acid-CoA ligase activity"/>
    <property type="evidence" value="ECO:0000314"/>
    <property type="project" value="FlyBase"/>
</dbReference>
<dbReference type="GO" id="GO:0006631">
    <property type="term" value="P:fatty acid metabolic process"/>
    <property type="evidence" value="ECO:0000315"/>
    <property type="project" value="FlyBase"/>
</dbReference>
<dbReference type="GO" id="GO:0042759">
    <property type="term" value="P:long-chain fatty acid biosynthetic process"/>
    <property type="evidence" value="ECO:0000318"/>
    <property type="project" value="GO_Central"/>
</dbReference>
<dbReference type="GO" id="GO:0001676">
    <property type="term" value="P:long-chain fatty acid metabolic process"/>
    <property type="evidence" value="ECO:0000315"/>
    <property type="project" value="UniProtKB"/>
</dbReference>
<dbReference type="GO" id="GO:0007498">
    <property type="term" value="P:mesoderm development"/>
    <property type="evidence" value="ECO:0000270"/>
    <property type="project" value="FlyBase"/>
</dbReference>
<dbReference type="GO" id="GO:0070050">
    <property type="term" value="P:neuron cellular homeostasis"/>
    <property type="evidence" value="ECO:0000315"/>
    <property type="project" value="FlyBase"/>
</dbReference>
<dbReference type="GO" id="GO:0045938">
    <property type="term" value="P:positive regulation of circadian sleep/wake cycle, sleep"/>
    <property type="evidence" value="ECO:0000315"/>
    <property type="project" value="FlyBase"/>
</dbReference>
<dbReference type="GO" id="GO:0070328">
    <property type="term" value="P:triglyceride homeostasis"/>
    <property type="evidence" value="ECO:0000315"/>
    <property type="project" value="FlyBase"/>
</dbReference>
<dbReference type="Gene3D" id="3.40.50.12780">
    <property type="entry name" value="N-terminal domain of ligase-like"/>
    <property type="match status" value="1"/>
</dbReference>
<dbReference type="InterPro" id="IPR000873">
    <property type="entry name" value="AMP-dep_synth/lig_dom"/>
</dbReference>
<dbReference type="InterPro" id="IPR042099">
    <property type="entry name" value="ANL_N_sf"/>
</dbReference>
<dbReference type="PANTHER" id="PTHR43272:SF32">
    <property type="entry name" value="AMP-DEPENDENT SYNTHETASE_LIGASE DOMAIN-CONTAINING PROTEIN"/>
    <property type="match status" value="1"/>
</dbReference>
<dbReference type="PANTHER" id="PTHR43272">
    <property type="entry name" value="LONG-CHAIN-FATTY-ACID--COA LIGASE"/>
    <property type="match status" value="1"/>
</dbReference>
<dbReference type="Pfam" id="PF00501">
    <property type="entry name" value="AMP-binding"/>
    <property type="match status" value="1"/>
</dbReference>
<dbReference type="Pfam" id="PF23562">
    <property type="entry name" value="AMP-binding_C_3"/>
    <property type="match status" value="1"/>
</dbReference>
<dbReference type="SUPFAM" id="SSF56801">
    <property type="entry name" value="Acetyl-CoA synthetase-like"/>
    <property type="match status" value="1"/>
</dbReference>
<reference key="1">
    <citation type="journal article" date="2000" name="Science">
        <title>The genome sequence of Drosophila melanogaster.</title>
        <authorList>
            <person name="Adams M.D."/>
            <person name="Celniker S.E."/>
            <person name="Holt R.A."/>
            <person name="Evans C.A."/>
            <person name="Gocayne J.D."/>
            <person name="Amanatides P.G."/>
            <person name="Scherer S.E."/>
            <person name="Li P.W."/>
            <person name="Hoskins R.A."/>
            <person name="Galle R.F."/>
            <person name="George R.A."/>
            <person name="Lewis S.E."/>
            <person name="Richards S."/>
            <person name="Ashburner M."/>
            <person name="Henderson S.N."/>
            <person name="Sutton G.G."/>
            <person name="Wortman J.R."/>
            <person name="Yandell M.D."/>
            <person name="Zhang Q."/>
            <person name="Chen L.X."/>
            <person name="Brandon R.C."/>
            <person name="Rogers Y.-H.C."/>
            <person name="Blazej R.G."/>
            <person name="Champe M."/>
            <person name="Pfeiffer B.D."/>
            <person name="Wan K.H."/>
            <person name="Doyle C."/>
            <person name="Baxter E.G."/>
            <person name="Helt G."/>
            <person name="Nelson C.R."/>
            <person name="Miklos G.L.G."/>
            <person name="Abril J.F."/>
            <person name="Agbayani A."/>
            <person name="An H.-J."/>
            <person name="Andrews-Pfannkoch C."/>
            <person name="Baldwin D."/>
            <person name="Ballew R.M."/>
            <person name="Basu A."/>
            <person name="Baxendale J."/>
            <person name="Bayraktaroglu L."/>
            <person name="Beasley E.M."/>
            <person name="Beeson K.Y."/>
            <person name="Benos P.V."/>
            <person name="Berman B.P."/>
            <person name="Bhandari D."/>
            <person name="Bolshakov S."/>
            <person name="Borkova D."/>
            <person name="Botchan M.R."/>
            <person name="Bouck J."/>
            <person name="Brokstein P."/>
            <person name="Brottier P."/>
            <person name="Burtis K.C."/>
            <person name="Busam D.A."/>
            <person name="Butler H."/>
            <person name="Cadieu E."/>
            <person name="Center A."/>
            <person name="Chandra I."/>
            <person name="Cherry J.M."/>
            <person name="Cawley S."/>
            <person name="Dahlke C."/>
            <person name="Davenport L.B."/>
            <person name="Davies P."/>
            <person name="de Pablos B."/>
            <person name="Delcher A."/>
            <person name="Deng Z."/>
            <person name="Mays A.D."/>
            <person name="Dew I."/>
            <person name="Dietz S.M."/>
            <person name="Dodson K."/>
            <person name="Doup L.E."/>
            <person name="Downes M."/>
            <person name="Dugan-Rocha S."/>
            <person name="Dunkov B.C."/>
            <person name="Dunn P."/>
            <person name="Durbin K.J."/>
            <person name="Evangelista C.C."/>
            <person name="Ferraz C."/>
            <person name="Ferriera S."/>
            <person name="Fleischmann W."/>
            <person name="Fosler C."/>
            <person name="Gabrielian A.E."/>
            <person name="Garg N.S."/>
            <person name="Gelbart W.M."/>
            <person name="Glasser K."/>
            <person name="Glodek A."/>
            <person name="Gong F."/>
            <person name="Gorrell J.H."/>
            <person name="Gu Z."/>
            <person name="Guan P."/>
            <person name="Harris M."/>
            <person name="Harris N.L."/>
            <person name="Harvey D.A."/>
            <person name="Heiman T.J."/>
            <person name="Hernandez J.R."/>
            <person name="Houck J."/>
            <person name="Hostin D."/>
            <person name="Houston K.A."/>
            <person name="Howland T.J."/>
            <person name="Wei M.-H."/>
            <person name="Ibegwam C."/>
            <person name="Jalali M."/>
            <person name="Kalush F."/>
            <person name="Karpen G.H."/>
            <person name="Ke Z."/>
            <person name="Kennison J.A."/>
            <person name="Ketchum K.A."/>
            <person name="Kimmel B.E."/>
            <person name="Kodira C.D."/>
            <person name="Kraft C.L."/>
            <person name="Kravitz S."/>
            <person name="Kulp D."/>
            <person name="Lai Z."/>
            <person name="Lasko P."/>
            <person name="Lei Y."/>
            <person name="Levitsky A.A."/>
            <person name="Li J.H."/>
            <person name="Li Z."/>
            <person name="Liang Y."/>
            <person name="Lin X."/>
            <person name="Liu X."/>
            <person name="Mattei B."/>
            <person name="McIntosh T.C."/>
            <person name="McLeod M.P."/>
            <person name="McPherson D."/>
            <person name="Merkulov G."/>
            <person name="Milshina N.V."/>
            <person name="Mobarry C."/>
            <person name="Morris J."/>
            <person name="Moshrefi A."/>
            <person name="Mount S.M."/>
            <person name="Moy M."/>
            <person name="Murphy B."/>
            <person name="Murphy L."/>
            <person name="Muzny D.M."/>
            <person name="Nelson D.L."/>
            <person name="Nelson D.R."/>
            <person name="Nelson K.A."/>
            <person name="Nixon K."/>
            <person name="Nusskern D.R."/>
            <person name="Pacleb J.M."/>
            <person name="Palazzolo M."/>
            <person name="Pittman G.S."/>
            <person name="Pan S."/>
            <person name="Pollard J."/>
            <person name="Puri V."/>
            <person name="Reese M.G."/>
            <person name="Reinert K."/>
            <person name="Remington K."/>
            <person name="Saunders R.D.C."/>
            <person name="Scheeler F."/>
            <person name="Shen H."/>
            <person name="Shue B.C."/>
            <person name="Siden-Kiamos I."/>
            <person name="Simpson M."/>
            <person name="Skupski M.P."/>
            <person name="Smith T.J."/>
            <person name="Spier E."/>
            <person name="Spradling A.C."/>
            <person name="Stapleton M."/>
            <person name="Strong R."/>
            <person name="Sun E."/>
            <person name="Svirskas R."/>
            <person name="Tector C."/>
            <person name="Turner R."/>
            <person name="Venter E."/>
            <person name="Wang A.H."/>
            <person name="Wang X."/>
            <person name="Wang Z.-Y."/>
            <person name="Wassarman D.A."/>
            <person name="Weinstock G.M."/>
            <person name="Weissenbach J."/>
            <person name="Williams S.M."/>
            <person name="Woodage T."/>
            <person name="Worley K.C."/>
            <person name="Wu D."/>
            <person name="Yang S."/>
            <person name="Yao Q.A."/>
            <person name="Ye J."/>
            <person name="Yeh R.-F."/>
            <person name="Zaveri J.S."/>
            <person name="Zhan M."/>
            <person name="Zhang G."/>
            <person name="Zhao Q."/>
            <person name="Zheng L."/>
            <person name="Zheng X.H."/>
            <person name="Zhong F.N."/>
            <person name="Zhong W."/>
            <person name="Zhou X."/>
            <person name="Zhu S.C."/>
            <person name="Zhu X."/>
            <person name="Smith H.O."/>
            <person name="Gibbs R.A."/>
            <person name="Myers E.W."/>
            <person name="Rubin G.M."/>
            <person name="Venter J.C."/>
        </authorList>
    </citation>
    <scope>NUCLEOTIDE SEQUENCE [LARGE SCALE GENOMIC DNA]</scope>
    <source>
        <strain>Berkeley</strain>
    </source>
</reference>
<reference key="2">
    <citation type="journal article" date="2002" name="Genome Biol.">
        <title>Annotation of the Drosophila melanogaster euchromatic genome: a systematic review.</title>
        <authorList>
            <person name="Misra S."/>
            <person name="Crosby M.A."/>
            <person name="Mungall C.J."/>
            <person name="Matthews B.B."/>
            <person name="Campbell K.S."/>
            <person name="Hradecky P."/>
            <person name="Huang Y."/>
            <person name="Kaminker J.S."/>
            <person name="Millburn G.H."/>
            <person name="Prochnik S.E."/>
            <person name="Smith C.D."/>
            <person name="Tupy J.L."/>
            <person name="Whitfield E.J."/>
            <person name="Bayraktaroglu L."/>
            <person name="Berman B.P."/>
            <person name="Bettencourt B.R."/>
            <person name="Celniker S.E."/>
            <person name="de Grey A.D.N.J."/>
            <person name="Drysdale R.A."/>
            <person name="Harris N.L."/>
            <person name="Richter J."/>
            <person name="Russo S."/>
            <person name="Schroeder A.J."/>
            <person name="Shu S.Q."/>
            <person name="Stapleton M."/>
            <person name="Yamada C."/>
            <person name="Ashburner M."/>
            <person name="Gelbart W.M."/>
            <person name="Rubin G.M."/>
            <person name="Lewis S.E."/>
        </authorList>
    </citation>
    <scope>GENOME REANNOTATION</scope>
    <source>
        <strain>Berkeley</strain>
    </source>
</reference>
<reference key="3">
    <citation type="submission" date="2005-03" db="EMBL/GenBank/DDBJ databases">
        <authorList>
            <person name="Stapleton M."/>
            <person name="Carlson J.W."/>
            <person name="Chavez C."/>
            <person name="Frise E."/>
            <person name="George R.A."/>
            <person name="Pacleb J.M."/>
            <person name="Park S."/>
            <person name="Wan K.H."/>
            <person name="Yu C."/>
            <person name="Rubin G.M."/>
            <person name="Celniker S.E."/>
        </authorList>
    </citation>
    <scope>NUCLEOTIDE SEQUENCE [LARGE SCALE MRNA] OF 2-681</scope>
    <source>
        <strain>Berkeley</strain>
        <tissue>Embryo</tissue>
    </source>
</reference>
<reference key="4">
    <citation type="journal article" date="2015" name="Sleep">
        <title>Identification of genes associated with resilience/vulnerability to sleep deprivation and starvation in Drosophila.</title>
        <authorList>
            <person name="Thimgan M.S."/>
            <person name="Seugnet L."/>
            <person name="Turk J."/>
            <person name="Shaw P.J."/>
        </authorList>
    </citation>
    <scope>FUNCTION</scope>
    <scope>DISRUPTION PHENOTYPE</scope>
</reference>
<reference key="5">
    <citation type="journal article" date="2016" name="Dis. Model. Mech.">
        <title>Neurodegeneration in a Drosophila model of adrenoleukodystrophy: the roles of the Bubblegum and Double bubble acyl-CoA synthetases.</title>
        <authorList>
            <person name="Sivachenko A."/>
            <person name="Gordon H.B."/>
            <person name="Kimball S.S."/>
            <person name="Gavin E.J."/>
            <person name="Bonkowsky J.L."/>
            <person name="Letsou A."/>
        </authorList>
    </citation>
    <scope>FUNCTION</scope>
    <scope>CATALYTIC ACTIVITY</scope>
    <scope>DISRUPTION PHENOTYPE</scope>
</reference>
<reference key="6">
    <citation type="journal article" date="2018" name="Dis. Model. Mech.">
        <title>Etiology and treatment of adrenoleukodystrophy: new insights from Drosophila.</title>
        <authorList>
            <person name="Gordon H.B."/>
            <person name="Valdez L."/>
            <person name="Letsou A."/>
        </authorList>
    </citation>
    <scope>FUNCTION</scope>
    <scope>DISRUPTION PHENOTYPE</scope>
</reference>
<protein>
    <recommendedName>
        <fullName evidence="5 10">Long-chain-fatty-acid--CoA ligase heimdall</fullName>
        <ecNumber evidence="9">6.2.1.3</ecNumber>
    </recommendedName>
    <alternativeName>
        <fullName evidence="6">Very long-chain-fatty-acid--CoA ligase double bubble</fullName>
    </alternativeName>
</protein>
<feature type="chain" id="PRO_0000315818" description="Long-chain-fatty-acid--CoA ligase heimdall">
    <location>
        <begin position="1"/>
        <end position="681"/>
    </location>
</feature>
<feature type="binding site" evidence="1">
    <location>
        <begin position="223"/>
        <end position="231"/>
    </location>
    <ligand>
        <name>ATP</name>
        <dbReference type="ChEBI" id="CHEBI:30616"/>
    </ligand>
</feature>
<feature type="binding site" evidence="1">
    <location>
        <begin position="414"/>
        <end position="419"/>
    </location>
    <ligand>
        <name>ATP</name>
        <dbReference type="ChEBI" id="CHEBI:30616"/>
    </ligand>
</feature>
<feature type="binding site" evidence="1">
    <location>
        <position position="491"/>
    </location>
    <ligand>
        <name>ATP</name>
        <dbReference type="ChEBI" id="CHEBI:30616"/>
    </ligand>
</feature>
<feature type="binding site" evidence="1">
    <location>
        <position position="506"/>
    </location>
    <ligand>
        <name>ATP</name>
        <dbReference type="ChEBI" id="CHEBI:30616"/>
    </ligand>
</feature>
<feature type="binding site" evidence="1">
    <location>
        <position position="639"/>
    </location>
    <ligand>
        <name>ATP</name>
        <dbReference type="ChEBI" id="CHEBI:30616"/>
    </ligand>
</feature>
<organism>
    <name type="scientific">Drosophila melanogaster</name>
    <name type="common">Fruit fly</name>
    <dbReference type="NCBI Taxonomy" id="7227"/>
    <lineage>
        <taxon>Eukaryota</taxon>
        <taxon>Metazoa</taxon>
        <taxon>Ecdysozoa</taxon>
        <taxon>Arthropoda</taxon>
        <taxon>Hexapoda</taxon>
        <taxon>Insecta</taxon>
        <taxon>Pterygota</taxon>
        <taxon>Neoptera</taxon>
        <taxon>Endopterygota</taxon>
        <taxon>Diptera</taxon>
        <taxon>Brachycera</taxon>
        <taxon>Muscomorpha</taxon>
        <taxon>Ephydroidea</taxon>
        <taxon>Drosophilidae</taxon>
        <taxon>Drosophila</taxon>
        <taxon>Sophophora</taxon>
    </lineage>
</organism>
<comment type="function">
    <text evidence="2 3 4">Mediates activation of long-chain fatty acids for both synthesis of cellular lipids, and degradation via beta-oxidation (PubMed:26893370, PubMed:29739804). Probably by regulating lipid storage and catabolism, plays a role in neuronal function (PubMed:25409104).</text>
</comment>
<comment type="catalytic activity">
    <reaction evidence="9">
        <text>a long-chain fatty acid + ATP + CoA = a long-chain fatty acyl-CoA + AMP + diphosphate</text>
        <dbReference type="Rhea" id="RHEA:15421"/>
        <dbReference type="ChEBI" id="CHEBI:30616"/>
        <dbReference type="ChEBI" id="CHEBI:33019"/>
        <dbReference type="ChEBI" id="CHEBI:57287"/>
        <dbReference type="ChEBI" id="CHEBI:57560"/>
        <dbReference type="ChEBI" id="CHEBI:83139"/>
        <dbReference type="ChEBI" id="CHEBI:456215"/>
        <dbReference type="EC" id="6.2.1.3"/>
    </reaction>
</comment>
<comment type="disruption phenotype">
    <text evidence="2 3 4">Results in neurodegeneration in the central nervous system including degeneration of lamina and retina, defects in the fenestrated basement membrane, ommatidial disarray, locomotor defects and shortened lifespan (PubMed:26893370, PubMed:29739804). The phenotype is exacerbated in constant light conditions and improves in total darkness (PubMed:29739804). Effects are probably due to elevated levels of very long chain fatty acids (VLCFAs) (PubMed:29739804). Feeding the fly mutant with medium-chain fatty acids, blocks the accumulation of excess VLCFAs as well as development of the pathology (PubMed:29739804). Simultaneous knockout of bgm results in enhanced retinal degeneration and altered fatty acids metabolism (PubMed:26893370). RNAi-mediated knockdown in the adult results in reduction of triglycerides and altered neuronal function, including altered sleep rebound following sleep deprivation (PubMed:25409104).</text>
</comment>
<comment type="miscellaneous">
    <text evidence="8">In Norse mythology, Heimdall is the fictional character that for ages guarded the bridge to Asgard without sleeping and without the consequences of sleep deprivation.</text>
</comment>
<comment type="similarity">
    <text evidence="7">Belongs to the ATP-dependent AMP-binding enzyme family. Bubblegum subfamily.</text>
</comment>
<comment type="sequence caution" evidence="7">
    <conflict type="erroneous termination">
        <sequence resource="EMBL-CDS" id="AAM12254"/>
    </conflict>
    <text>Truncated C-terminus.</text>
</comment>
<gene>
    <name evidence="5 10" type="primary">hll</name>
    <name evidence="10" type="synonym">BG:DS05899.1</name>
    <name evidence="10" type="synonym">dbb</name>
    <name evidence="10" type="ORF">CG4500</name>
</gene>
<name>HMLL_DROME</name>
<keyword id="KW-0067">ATP-binding</keyword>
<keyword id="KW-0276">Fatty acid metabolism</keyword>
<keyword id="KW-0436">Ligase</keyword>
<keyword id="KW-0443">Lipid metabolism</keyword>
<keyword id="KW-0547">Nucleotide-binding</keyword>
<keyword id="KW-1185">Reference proteome</keyword>
<proteinExistence type="evidence at protein level"/>